<proteinExistence type="evidence at protein level"/>
<evidence type="ECO:0000250" key="1">
    <source>
        <dbReference type="UniProtKB" id="C9EIP1"/>
    </source>
</evidence>
<evidence type="ECO:0000250" key="2">
    <source>
        <dbReference type="UniProtKB" id="Q004B5"/>
    </source>
</evidence>
<evidence type="ECO:0000255" key="3">
    <source>
        <dbReference type="PROSITE-ProRule" id="PRU00842"/>
    </source>
</evidence>
<evidence type="ECO:0000255" key="4">
    <source>
        <dbReference type="PROSITE-ProRule" id="PRU00843"/>
    </source>
</evidence>
<evidence type="ECO:0000255" key="5">
    <source>
        <dbReference type="RuleBase" id="RU000505"/>
    </source>
</evidence>
<evidence type="ECO:0000269" key="6">
    <source>
    </source>
</evidence>
<evidence type="ECO:0000269" key="7">
    <source>
    </source>
</evidence>
<evidence type="ECO:0000269" key="8">
    <source>
    </source>
</evidence>
<evidence type="ECO:0000303" key="9">
    <source>
    </source>
</evidence>
<evidence type="ECO:0000303" key="10">
    <source>
    </source>
</evidence>
<evidence type="ECO:0000303" key="11">
    <source>
    </source>
</evidence>
<evidence type="ECO:0000305" key="12"/>
<evidence type="ECO:0000305" key="13">
    <source>
    </source>
</evidence>
<evidence type="ECO:0000312" key="14">
    <source>
        <dbReference type="EMBL" id="AFA45340.1"/>
    </source>
</evidence>
<evidence type="ECO:0007829" key="15">
    <source>
        <dbReference type="PDB" id="5ZHQ"/>
    </source>
</evidence>
<sequence length="357" mass="40299">MADAAVIEKLEEGFKKLEAATDCKSLLKKYLTKSVFDQLKGKKTSLGATLLDVIQSGVENLDSGVGVYAPDAEAYTLFAPLFDPIIEDYHKGFKQTDKHPNKDFGDVNQFVNVDPDGKFVISTRVRCGRSMEGYPFNPCLTEAQYKEMESKVSSTLSNLEGELKGTYYPLTGMTKDVQQKLIDDHFLFKEGDRFLQAANACRYWPTGRGIYHNDNKTFLVWCNEEDHLRIISMQMGGDLGQVYRRLVSAVNEIEKRVPFSHHDRLGFLTFCPTNLGTTVRASVHIKLPKLAANREKLEEVAGKYSLQVRGTRGEHTEAEGGVYDISNKRRMGLTEFQAVKEMQDGILELIKIEKEMQ</sequence>
<reference evidence="14" key="1">
    <citation type="journal article" date="2013" name="Mol. Immunol.">
        <title>Structural characterization and IgE epitope analysis of arginine kinase from Scylla paramamosain.</title>
        <authorList>
            <person name="Mao H.Y."/>
            <person name="Cao M.J."/>
            <person name="Maleki S.J."/>
            <person name="Cai Q.F."/>
            <person name="Su W.J."/>
            <person name="Yang Y."/>
            <person name="Liu G.M."/>
        </authorList>
    </citation>
    <scope>NUCLEOTIDE SEQUENCE [MRNA]</scope>
    <scope>3D-STRUCTURE MODELING</scope>
    <scope>TISSUE SPECIFICITY</scope>
    <scope>GLYCOSYLATION</scope>
    <scope>ALLERGEN</scope>
    <scope>REGION</scope>
    <source>
        <tissue evidence="9">Muscle</tissue>
    </source>
</reference>
<reference key="2">
    <citation type="journal article" date="2015" name="Mol. Immunol.">
        <title>Mapping and characterization of antigenic epitopes of arginine kinase of Scylla paramamosain.</title>
        <authorList>
            <person name="Yang Y."/>
            <person name="Cao M.J."/>
            <person name="Alcocer M."/>
            <person name="Liu Q.M."/>
            <person name="Fei D.X."/>
            <person name="Mao H.Y."/>
            <person name="Liu G.M."/>
        </authorList>
    </citation>
    <scope>3D-STRUCTURE MODELING</scope>
    <scope>TISSUE SPECIFICITY</scope>
    <scope>ALLERGEN</scope>
    <scope>REGION</scope>
</reference>
<reference key="3">
    <citation type="journal article" date="2019" name="Food Chem.">
        <title>Crystal structure determination of Scylla paramamosain arginine kinase, an allergen that may cause cross-reactivity among invertebrates.</title>
        <authorList>
            <person name="Yang Y."/>
            <person name="Liu G.Y."/>
            <person name="Yang H."/>
            <person name="Hu M.J."/>
            <person name="Cao M.J."/>
            <person name="Su W.J."/>
            <person name="Jin T."/>
            <person name="Liu G.M."/>
        </authorList>
    </citation>
    <scope>X-RAY CRYSTALLOGRAPHY (3.0 ANGSTROMS)</scope>
    <scope>TISSUE SPECIFICITY</scope>
    <scope>ALLERGEN</scope>
</reference>
<organism>
    <name type="scientific">Scylla paramamosain</name>
    <name type="common">Mud crab</name>
    <dbReference type="NCBI Taxonomy" id="85552"/>
    <lineage>
        <taxon>Eukaryota</taxon>
        <taxon>Metazoa</taxon>
        <taxon>Ecdysozoa</taxon>
        <taxon>Arthropoda</taxon>
        <taxon>Crustacea</taxon>
        <taxon>Multicrustacea</taxon>
        <taxon>Malacostraca</taxon>
        <taxon>Eumalacostraca</taxon>
        <taxon>Eucarida</taxon>
        <taxon>Decapoda</taxon>
        <taxon>Pleocyemata</taxon>
        <taxon>Brachyura</taxon>
        <taxon>Eubrachyura</taxon>
        <taxon>Portunoidea</taxon>
        <taxon>Portunidae</taxon>
        <taxon>Portuninae</taxon>
        <taxon>Scylla</taxon>
    </lineage>
</organism>
<feature type="initiator methionine" description="Removed" evidence="2">
    <location>
        <position position="1"/>
    </location>
</feature>
<feature type="chain" id="PRO_0000447433" description="Arginine kinase Scy p 2.0101">
    <location>
        <begin position="2"/>
        <end position="357"/>
    </location>
</feature>
<feature type="domain" description="Phosphagen kinase N-terminal" evidence="3">
    <location>
        <begin position="9"/>
        <end position="91"/>
    </location>
</feature>
<feature type="domain" description="Phosphagen kinase C-terminal" evidence="4">
    <location>
        <begin position="119"/>
        <end position="356"/>
    </location>
</feature>
<feature type="region of interest" description="IgE-binding and beta-hexosaminidase release from rat basophilic leukemia (RBL) cells" evidence="7">
    <location>
        <begin position="113"/>
        <end position="127"/>
    </location>
</feature>
<feature type="region of interest" description="IgE-binding and beta-hexosaminidase release from rat basophilic leukemia (RBL) cells" evidence="6 7">
    <location>
        <begin position="127"/>
        <end position="155"/>
    </location>
</feature>
<feature type="region of interest" description="IgE-binding and beta-hexosaminidase release from rat basophilic leukemia (RBL) cells" evidence="7">
    <location>
        <begin position="204"/>
        <end position="218"/>
    </location>
</feature>
<feature type="region of interest" description="IgE-binding, but no beta-hexosaminidase release from rat basophilic leukemia (RBL) cells" evidence="6 7">
    <location>
        <begin position="211"/>
        <end position="225"/>
    </location>
</feature>
<feature type="region of interest" description="IgE-binding, but no beta-hexosaminidase release from rat basophilic leukemia (RBL) cells" evidence="7">
    <location>
        <begin position="316"/>
        <end position="330"/>
    </location>
</feature>
<feature type="binding site" evidence="2">
    <location>
        <begin position="64"/>
        <end position="68"/>
    </location>
    <ligand>
        <name>L-arginine</name>
        <dbReference type="ChEBI" id="CHEBI:32682"/>
    </ligand>
</feature>
<feature type="binding site" evidence="4">
    <location>
        <begin position="122"/>
        <end position="126"/>
    </location>
    <ligand>
        <name>ATP</name>
        <dbReference type="ChEBI" id="CHEBI:30616"/>
    </ligand>
</feature>
<feature type="binding site" evidence="4">
    <location>
        <position position="185"/>
    </location>
    <ligand>
        <name>ATP</name>
        <dbReference type="ChEBI" id="CHEBI:30616"/>
    </ligand>
</feature>
<feature type="binding site" evidence="2">
    <location>
        <position position="225"/>
    </location>
    <ligand>
        <name>L-arginine</name>
        <dbReference type="ChEBI" id="CHEBI:32682"/>
    </ligand>
</feature>
<feature type="binding site" evidence="4">
    <location>
        <position position="229"/>
    </location>
    <ligand>
        <name>ATP</name>
        <dbReference type="ChEBI" id="CHEBI:30616"/>
    </ligand>
</feature>
<feature type="binding site" evidence="2">
    <location>
        <position position="271"/>
    </location>
    <ligand>
        <name>L-arginine</name>
        <dbReference type="ChEBI" id="CHEBI:32682"/>
    </ligand>
</feature>
<feature type="binding site" evidence="4">
    <location>
        <begin position="280"/>
        <end position="284"/>
    </location>
    <ligand>
        <name>ATP</name>
        <dbReference type="ChEBI" id="CHEBI:30616"/>
    </ligand>
</feature>
<feature type="binding site" evidence="4">
    <location>
        <begin position="309"/>
        <end position="314"/>
    </location>
    <ligand>
        <name>ATP</name>
        <dbReference type="ChEBI" id="CHEBI:30616"/>
    </ligand>
</feature>
<feature type="binding site" evidence="2">
    <location>
        <position position="314"/>
    </location>
    <ligand>
        <name>L-arginine</name>
        <dbReference type="ChEBI" id="CHEBI:32682"/>
    </ligand>
</feature>
<feature type="disulfide bond" evidence="13">
    <location>
        <begin position="201"/>
        <end position="271"/>
    </location>
</feature>
<feature type="helix" evidence="15">
    <location>
        <begin position="4"/>
        <end position="18"/>
    </location>
</feature>
<feature type="helix" evidence="15">
    <location>
        <begin position="26"/>
        <end position="30"/>
    </location>
</feature>
<feature type="helix" evidence="15">
    <location>
        <begin position="33"/>
        <end position="39"/>
    </location>
</feature>
<feature type="helix" evidence="15">
    <location>
        <begin position="51"/>
        <end position="59"/>
    </location>
</feature>
<feature type="strand" evidence="15">
    <location>
        <begin position="70"/>
        <end position="72"/>
    </location>
</feature>
<feature type="helix" evidence="15">
    <location>
        <begin position="74"/>
        <end position="77"/>
    </location>
</feature>
<feature type="helix" evidence="15">
    <location>
        <begin position="79"/>
        <end position="89"/>
    </location>
</feature>
<feature type="helix" evidence="15">
    <location>
        <begin position="107"/>
        <end position="109"/>
    </location>
</feature>
<feature type="strand" evidence="15">
    <location>
        <begin position="117"/>
        <end position="129"/>
    </location>
</feature>
<feature type="turn" evidence="15">
    <location>
        <begin position="137"/>
        <end position="139"/>
    </location>
</feature>
<feature type="helix" evidence="15">
    <location>
        <begin position="142"/>
        <end position="157"/>
    </location>
</feature>
<feature type="helix" evidence="15">
    <location>
        <begin position="161"/>
        <end position="163"/>
    </location>
</feature>
<feature type="strand" evidence="15">
    <location>
        <begin position="165"/>
        <end position="170"/>
    </location>
</feature>
<feature type="helix" evidence="15">
    <location>
        <begin position="175"/>
        <end position="183"/>
    </location>
</feature>
<feature type="helix" evidence="15">
    <location>
        <begin position="193"/>
        <end position="197"/>
    </location>
</feature>
<feature type="turn" evidence="15">
    <location>
        <begin position="198"/>
        <end position="207"/>
    </location>
</feature>
<feature type="strand" evidence="15">
    <location>
        <begin position="209"/>
        <end position="213"/>
    </location>
</feature>
<feature type="strand" evidence="15">
    <location>
        <begin position="218"/>
        <end position="237"/>
    </location>
</feature>
<feature type="helix" evidence="15">
    <location>
        <begin position="239"/>
        <end position="256"/>
    </location>
</feature>
<feature type="turn" evidence="15">
    <location>
        <begin position="263"/>
        <end position="265"/>
    </location>
</feature>
<feature type="helix" evidence="15">
    <location>
        <begin position="272"/>
        <end position="274"/>
    </location>
</feature>
<feature type="strand" evidence="15">
    <location>
        <begin position="280"/>
        <end position="286"/>
    </location>
</feature>
<feature type="helix" evidence="15">
    <location>
        <begin position="288"/>
        <end position="292"/>
    </location>
</feature>
<feature type="helix" evidence="15">
    <location>
        <begin position="294"/>
        <end position="303"/>
    </location>
</feature>
<feature type="strand" evidence="15">
    <location>
        <begin position="306"/>
        <end position="310"/>
    </location>
</feature>
<feature type="strand" evidence="15">
    <location>
        <begin position="322"/>
        <end position="327"/>
    </location>
</feature>
<feature type="strand" evidence="15">
    <location>
        <begin position="331"/>
        <end position="333"/>
    </location>
</feature>
<feature type="helix" evidence="15">
    <location>
        <begin position="335"/>
        <end position="354"/>
    </location>
</feature>
<comment type="function">
    <text evidence="1">Catalyzes the reversible transfer of high energy ATP gamma-phosphate group to L-arginine.</text>
</comment>
<comment type="catalytic activity">
    <reaction evidence="1">
        <text>L-arginine + ATP = N(omega)-phospho-L-arginine + ADP + H(+)</text>
        <dbReference type="Rhea" id="RHEA:22940"/>
        <dbReference type="ChEBI" id="CHEBI:15378"/>
        <dbReference type="ChEBI" id="CHEBI:30616"/>
        <dbReference type="ChEBI" id="CHEBI:32682"/>
        <dbReference type="ChEBI" id="CHEBI:58477"/>
        <dbReference type="ChEBI" id="CHEBI:456216"/>
        <dbReference type="EC" id="2.7.3.3"/>
    </reaction>
</comment>
<comment type="tissue specificity">
    <text evidence="6 7 8">Muscle (at protein level).</text>
</comment>
<comment type="PTM">
    <text evidence="6">Glycosylated.</text>
</comment>
<comment type="allergen">
    <text evidence="6 7 8">Causes an allergic reaction in human. Binds to IgE of crab-allergic patients (PubMed:23911402, PubMed:25728640, PubMed:30236721). Binds to IgE in 89% of the 9 patients tested allergic to crab (PubMed:23911402). Causes degranulation of rat basophilic leukemia (RBL) cells and release of beta-hexosaminidase from them. Allergenicity is affected to different degrees by denaturants. SDS reduces allergenicity at low concentrations (0.3 mM), and allergenicity is almost completely abolished with 15 mM SDS. Urea concentrations of 2.0-3.0 M enhance allergenicity, whereas at concentrations higher than 4.0 M, the allergenicity is reduced. Slight change in allergenicity after guanidinium chloride (GdnHCl) treatment, but when concentration of GdnHCl reaches 1.5 M, the allergenicity is unchanged. DTT (disulfide bond-reducing agent), at a concentration of 10 mM, causes a slight reduction in allergenicity and it is decreased in a dose-dependent manner at concentrations of 10-250 mM, but remains steady at higher concentrations. 2.5 M beta-mercaptoethanol (another disulfide bond-reducing agent) treatment reduces allergenicity (PubMed:25728640).</text>
</comment>
<comment type="similarity">
    <text evidence="4 5 12">Belongs to the ATP:guanido phosphotransferase family.</text>
</comment>
<protein>
    <recommendedName>
        <fullName evidence="12">Arginine kinase Scy p 2.0101</fullName>
        <shortName evidence="9 10 11">AK</shortName>
        <ecNumber evidence="1">2.7.3.3</ecNumber>
    </recommendedName>
    <allergenName evidence="12">Scy p 2.0101</allergenName>
</protein>
<dbReference type="EC" id="2.7.3.3" evidence="1"/>
<dbReference type="EMBL" id="JN828652">
    <property type="protein sequence ID" value="AFA45340.1"/>
    <property type="molecule type" value="mRNA"/>
</dbReference>
<dbReference type="PDB" id="5ZHQ">
    <property type="method" value="X-ray"/>
    <property type="resolution" value="3.00 A"/>
    <property type="chains" value="A/B=1-357"/>
</dbReference>
<dbReference type="PDBsum" id="5ZHQ"/>
<dbReference type="SMR" id="H6VGI3"/>
<dbReference type="Allergome" id="12149">
    <property type="allergen name" value="Scy p 2.0101"/>
</dbReference>
<dbReference type="Allergome" id="9574">
    <property type="allergen name" value="Scy p 2"/>
</dbReference>
<dbReference type="BRENDA" id="2.7.3.3">
    <property type="organism ID" value="14671"/>
</dbReference>
<dbReference type="GO" id="GO:0005615">
    <property type="term" value="C:extracellular space"/>
    <property type="evidence" value="ECO:0007669"/>
    <property type="project" value="TreeGrafter"/>
</dbReference>
<dbReference type="GO" id="GO:0004054">
    <property type="term" value="F:arginine kinase activity"/>
    <property type="evidence" value="ECO:0000250"/>
    <property type="project" value="UniProtKB"/>
</dbReference>
<dbReference type="GO" id="GO:0005524">
    <property type="term" value="F:ATP binding"/>
    <property type="evidence" value="ECO:0000250"/>
    <property type="project" value="UniProtKB"/>
</dbReference>
<dbReference type="GO" id="GO:0004111">
    <property type="term" value="F:creatine kinase activity"/>
    <property type="evidence" value="ECO:0007669"/>
    <property type="project" value="InterPro"/>
</dbReference>
<dbReference type="GO" id="GO:0019863">
    <property type="term" value="F:IgE binding"/>
    <property type="evidence" value="ECO:0007669"/>
    <property type="project" value="UniProtKB-KW"/>
</dbReference>
<dbReference type="GO" id="GO:0046314">
    <property type="term" value="P:phosphocreatine biosynthetic process"/>
    <property type="evidence" value="ECO:0007669"/>
    <property type="project" value="InterPro"/>
</dbReference>
<dbReference type="CDD" id="cd07932">
    <property type="entry name" value="arginine_kinase_like"/>
    <property type="match status" value="1"/>
</dbReference>
<dbReference type="FunFam" id="3.30.590.10:FF:000006">
    <property type="entry name" value="Arginine kinase 1"/>
    <property type="match status" value="1"/>
</dbReference>
<dbReference type="FunFam" id="1.10.135.10:FF:000003">
    <property type="entry name" value="Three-domain arginine kinase"/>
    <property type="match status" value="1"/>
</dbReference>
<dbReference type="Gene3D" id="1.10.135.10">
    <property type="entry name" value="ATP:guanido phosphotransferase, N-terminal domain"/>
    <property type="match status" value="1"/>
</dbReference>
<dbReference type="Gene3D" id="3.30.590.10">
    <property type="entry name" value="Glutamine synthetase/guanido kinase, catalytic domain"/>
    <property type="match status" value="1"/>
</dbReference>
<dbReference type="InterPro" id="IPR000749">
    <property type="entry name" value="ATP-guanido_PTrfase"/>
</dbReference>
<dbReference type="InterPro" id="IPR022415">
    <property type="entry name" value="ATP-guanido_PTrfase_AS"/>
</dbReference>
<dbReference type="InterPro" id="IPR022414">
    <property type="entry name" value="ATP-guanido_PTrfase_cat"/>
</dbReference>
<dbReference type="InterPro" id="IPR022413">
    <property type="entry name" value="ATP-guanido_PTrfase_N"/>
</dbReference>
<dbReference type="InterPro" id="IPR036802">
    <property type="entry name" value="ATP-guanido_PTrfase_N_sf"/>
</dbReference>
<dbReference type="InterPro" id="IPR014746">
    <property type="entry name" value="Gln_synth/guanido_kin_cat_dom"/>
</dbReference>
<dbReference type="PANTHER" id="PTHR11547:SF38">
    <property type="entry name" value="ARGININE KINASE 1-RELATED"/>
    <property type="match status" value="1"/>
</dbReference>
<dbReference type="PANTHER" id="PTHR11547">
    <property type="entry name" value="ARGININE OR CREATINE KINASE"/>
    <property type="match status" value="1"/>
</dbReference>
<dbReference type="Pfam" id="PF00217">
    <property type="entry name" value="ATP-gua_Ptrans"/>
    <property type="match status" value="1"/>
</dbReference>
<dbReference type="Pfam" id="PF02807">
    <property type="entry name" value="ATP-gua_PtransN"/>
    <property type="match status" value="1"/>
</dbReference>
<dbReference type="SUPFAM" id="SSF55931">
    <property type="entry name" value="Glutamine synthetase/guanido kinase"/>
    <property type="match status" value="1"/>
</dbReference>
<dbReference type="SUPFAM" id="SSF48034">
    <property type="entry name" value="Guanido kinase N-terminal domain"/>
    <property type="match status" value="1"/>
</dbReference>
<dbReference type="PROSITE" id="PS00112">
    <property type="entry name" value="PHOSPHAGEN_KINASE"/>
    <property type="match status" value="1"/>
</dbReference>
<dbReference type="PROSITE" id="PS51510">
    <property type="entry name" value="PHOSPHAGEN_KINASE_C"/>
    <property type="match status" value="1"/>
</dbReference>
<dbReference type="PROSITE" id="PS51509">
    <property type="entry name" value="PHOSPHAGEN_KINASE_N"/>
    <property type="match status" value="1"/>
</dbReference>
<keyword id="KW-0002">3D-structure</keyword>
<keyword id="KW-0020">Allergen</keyword>
<keyword id="KW-0067">ATP-binding</keyword>
<keyword id="KW-1015">Disulfide bond</keyword>
<keyword id="KW-0325">Glycoprotein</keyword>
<keyword id="KW-0389">IgE-binding protein</keyword>
<keyword id="KW-0418">Kinase</keyword>
<keyword id="KW-0547">Nucleotide-binding</keyword>
<keyword id="KW-0808">Transferase</keyword>
<name>KARG0_SCYPA</name>
<accession>H6VGI3</accession>